<protein>
    <recommendedName>
        <fullName evidence="1">NAD(P)H dehydrogenase (quinone)</fullName>
        <ecNumber evidence="1">1.6.5.2</ecNumber>
    </recommendedName>
    <alternativeName>
        <fullName>Flavoprotein WrbA</fullName>
    </alternativeName>
    <alternativeName>
        <fullName evidence="1">NAD(P)H:quinone oxidoreductase</fullName>
        <shortName evidence="1">NQO</shortName>
    </alternativeName>
</protein>
<keyword id="KW-0285">Flavoprotein</keyword>
<keyword id="KW-0288">FMN</keyword>
<keyword id="KW-0520">NAD</keyword>
<keyword id="KW-0521">NADP</keyword>
<keyword id="KW-0547">Nucleotide-binding</keyword>
<keyword id="KW-0560">Oxidoreductase</keyword>
<name>NQOR_BRUA1</name>
<evidence type="ECO:0000255" key="1">
    <source>
        <dbReference type="HAMAP-Rule" id="MF_01017"/>
    </source>
</evidence>
<evidence type="ECO:0000256" key="2">
    <source>
        <dbReference type="SAM" id="MobiDB-lite"/>
    </source>
</evidence>
<feature type="chain" id="PRO_1000200615" description="NAD(P)H dehydrogenase (quinone)">
    <location>
        <begin position="1"/>
        <end position="199"/>
    </location>
</feature>
<feature type="domain" description="Flavodoxin-like" evidence="1">
    <location>
        <begin position="4"/>
        <end position="190"/>
    </location>
</feature>
<feature type="region of interest" description="Disordered" evidence="2">
    <location>
        <begin position="158"/>
        <end position="181"/>
    </location>
</feature>
<feature type="compositionally biased region" description="Polar residues" evidence="2">
    <location>
        <begin position="163"/>
        <end position="177"/>
    </location>
</feature>
<feature type="binding site" evidence="1">
    <location>
        <begin position="10"/>
        <end position="15"/>
    </location>
    <ligand>
        <name>FMN</name>
        <dbReference type="ChEBI" id="CHEBI:58210"/>
    </ligand>
</feature>
<feature type="binding site" evidence="1">
    <location>
        <position position="12"/>
    </location>
    <ligand>
        <name>NAD(+)</name>
        <dbReference type="ChEBI" id="CHEBI:57540"/>
    </ligand>
</feature>
<feature type="binding site" evidence="1">
    <location>
        <begin position="78"/>
        <end position="80"/>
    </location>
    <ligand>
        <name>FMN</name>
        <dbReference type="ChEBI" id="CHEBI:58210"/>
    </ligand>
</feature>
<feature type="binding site" evidence="1">
    <location>
        <position position="98"/>
    </location>
    <ligand>
        <name>substrate</name>
    </ligand>
</feature>
<feature type="binding site" evidence="1">
    <location>
        <begin position="113"/>
        <end position="119"/>
    </location>
    <ligand>
        <name>FMN</name>
        <dbReference type="ChEBI" id="CHEBI:58210"/>
    </ligand>
</feature>
<feature type="binding site" evidence="1">
    <location>
        <position position="134"/>
    </location>
    <ligand>
        <name>FMN</name>
        <dbReference type="ChEBI" id="CHEBI:58210"/>
    </ligand>
</feature>
<reference key="1">
    <citation type="journal article" date="2008" name="PLoS ONE">
        <title>Genome sequence of Brucella abortus vaccine strain S19 compared to virulent strains yields candidate virulence genes.</title>
        <authorList>
            <person name="Crasta O.R."/>
            <person name="Folkerts O."/>
            <person name="Fei Z."/>
            <person name="Mane S.P."/>
            <person name="Evans C."/>
            <person name="Martino-Catt S."/>
            <person name="Bricker B."/>
            <person name="Yu G."/>
            <person name="Du L."/>
            <person name="Sobral B.W."/>
        </authorList>
    </citation>
    <scope>NUCLEOTIDE SEQUENCE [LARGE SCALE GENOMIC DNA]</scope>
    <source>
        <strain>S19</strain>
    </source>
</reference>
<organism>
    <name type="scientific">Brucella abortus (strain S19)</name>
    <dbReference type="NCBI Taxonomy" id="430066"/>
    <lineage>
        <taxon>Bacteria</taxon>
        <taxon>Pseudomonadati</taxon>
        <taxon>Pseudomonadota</taxon>
        <taxon>Alphaproteobacteria</taxon>
        <taxon>Hyphomicrobiales</taxon>
        <taxon>Brucellaceae</taxon>
        <taxon>Brucella/Ochrobactrum group</taxon>
        <taxon>Brucella</taxon>
    </lineage>
</organism>
<comment type="catalytic activity">
    <reaction evidence="1">
        <text>a quinone + NADH + H(+) = a quinol + NAD(+)</text>
        <dbReference type="Rhea" id="RHEA:46160"/>
        <dbReference type="ChEBI" id="CHEBI:15378"/>
        <dbReference type="ChEBI" id="CHEBI:24646"/>
        <dbReference type="ChEBI" id="CHEBI:57540"/>
        <dbReference type="ChEBI" id="CHEBI:57945"/>
        <dbReference type="ChEBI" id="CHEBI:132124"/>
        <dbReference type="EC" id="1.6.5.2"/>
    </reaction>
</comment>
<comment type="catalytic activity">
    <reaction evidence="1">
        <text>a quinone + NADPH + H(+) = a quinol + NADP(+)</text>
        <dbReference type="Rhea" id="RHEA:46164"/>
        <dbReference type="ChEBI" id="CHEBI:15378"/>
        <dbReference type="ChEBI" id="CHEBI:24646"/>
        <dbReference type="ChEBI" id="CHEBI:57783"/>
        <dbReference type="ChEBI" id="CHEBI:58349"/>
        <dbReference type="ChEBI" id="CHEBI:132124"/>
        <dbReference type="EC" id="1.6.5.2"/>
    </reaction>
</comment>
<comment type="cofactor">
    <cofactor evidence="1">
        <name>FMN</name>
        <dbReference type="ChEBI" id="CHEBI:58210"/>
    </cofactor>
    <text evidence="1">Binds 1 FMN per monomer.</text>
</comment>
<comment type="similarity">
    <text evidence="1">Belongs to the WrbA family.</text>
</comment>
<dbReference type="EC" id="1.6.5.2" evidence="1"/>
<dbReference type="EMBL" id="CP000887">
    <property type="protein sequence ID" value="ACD72506.1"/>
    <property type="molecule type" value="Genomic_DNA"/>
</dbReference>
<dbReference type="SMR" id="B2S5Q9"/>
<dbReference type="DNASU" id="3787724"/>
<dbReference type="KEGG" id="bmc:BAbS19_I09910"/>
<dbReference type="HOGENOM" id="CLU_051402_0_2_5"/>
<dbReference type="Proteomes" id="UP000002565">
    <property type="component" value="Chromosome 1"/>
</dbReference>
<dbReference type="GO" id="GO:0016020">
    <property type="term" value="C:membrane"/>
    <property type="evidence" value="ECO:0007669"/>
    <property type="project" value="TreeGrafter"/>
</dbReference>
<dbReference type="GO" id="GO:0050660">
    <property type="term" value="F:flavin adenine dinucleotide binding"/>
    <property type="evidence" value="ECO:0007669"/>
    <property type="project" value="UniProtKB-UniRule"/>
</dbReference>
<dbReference type="GO" id="GO:0010181">
    <property type="term" value="F:FMN binding"/>
    <property type="evidence" value="ECO:0007669"/>
    <property type="project" value="InterPro"/>
</dbReference>
<dbReference type="GO" id="GO:0051287">
    <property type="term" value="F:NAD binding"/>
    <property type="evidence" value="ECO:0007669"/>
    <property type="project" value="UniProtKB-UniRule"/>
</dbReference>
<dbReference type="GO" id="GO:0050136">
    <property type="term" value="F:NADH:ubiquinone reductase (non-electrogenic) activity"/>
    <property type="evidence" value="ECO:0007669"/>
    <property type="project" value="RHEA"/>
</dbReference>
<dbReference type="GO" id="GO:0050661">
    <property type="term" value="F:NADP binding"/>
    <property type="evidence" value="ECO:0007669"/>
    <property type="project" value="UniProtKB-UniRule"/>
</dbReference>
<dbReference type="GO" id="GO:0008753">
    <property type="term" value="F:NADPH dehydrogenase (quinone) activity"/>
    <property type="evidence" value="ECO:0007669"/>
    <property type="project" value="RHEA"/>
</dbReference>
<dbReference type="FunFam" id="3.40.50.360:FF:000001">
    <property type="entry name" value="NAD(P)H dehydrogenase (Quinone) FQR1-like"/>
    <property type="match status" value="1"/>
</dbReference>
<dbReference type="Gene3D" id="3.40.50.360">
    <property type="match status" value="1"/>
</dbReference>
<dbReference type="HAMAP" id="MF_01017">
    <property type="entry name" value="NQOR"/>
    <property type="match status" value="1"/>
</dbReference>
<dbReference type="InterPro" id="IPR008254">
    <property type="entry name" value="Flavodoxin/NO_synth"/>
</dbReference>
<dbReference type="InterPro" id="IPR029039">
    <property type="entry name" value="Flavoprotein-like_sf"/>
</dbReference>
<dbReference type="InterPro" id="IPR010089">
    <property type="entry name" value="Flavoprotein_WrbA-like"/>
</dbReference>
<dbReference type="InterPro" id="IPR005025">
    <property type="entry name" value="FMN_Rdtase-like_dom"/>
</dbReference>
<dbReference type="InterPro" id="IPR037513">
    <property type="entry name" value="NQO"/>
</dbReference>
<dbReference type="NCBIfam" id="TIGR01755">
    <property type="entry name" value="flav_wrbA"/>
    <property type="match status" value="1"/>
</dbReference>
<dbReference type="NCBIfam" id="NF002999">
    <property type="entry name" value="PRK03767.1"/>
    <property type="match status" value="1"/>
</dbReference>
<dbReference type="PANTHER" id="PTHR30546">
    <property type="entry name" value="FLAVODOXIN-RELATED PROTEIN WRBA-RELATED"/>
    <property type="match status" value="1"/>
</dbReference>
<dbReference type="PANTHER" id="PTHR30546:SF23">
    <property type="entry name" value="FLAVOPROTEIN-LIKE PROTEIN YCP4-RELATED"/>
    <property type="match status" value="1"/>
</dbReference>
<dbReference type="Pfam" id="PF03358">
    <property type="entry name" value="FMN_red"/>
    <property type="match status" value="1"/>
</dbReference>
<dbReference type="SUPFAM" id="SSF52218">
    <property type="entry name" value="Flavoproteins"/>
    <property type="match status" value="1"/>
</dbReference>
<dbReference type="PROSITE" id="PS50902">
    <property type="entry name" value="FLAVODOXIN_LIKE"/>
    <property type="match status" value="1"/>
</dbReference>
<gene>
    <name type="ordered locus">BAbS19_I09910</name>
</gene>
<accession>B2S5Q9</accession>
<proteinExistence type="inferred from homology"/>
<sequence length="199" mass="21442">MVKMLVLYYSAYGYMEQMAKAAAEGAREGGAEVTLKRVPELVPEEVAKASHYKIDQEVPIATPGELADYDAIIIGTATRYGMMASQMKNFLDQTGGLWAKGALINKVGSVMVSTATQHGGAELALISTQWQMQHHGMIIVPLSYAYREQMGNDVVRGGAPYGMTTTADGDGSRQPSAQELDGARFQGRRVAEITAKLHG</sequence>